<geneLocation type="chloroplast"/>
<accession>Q9GF40</accession>
<name>MATK_ARABL</name>
<gene>
    <name evidence="1" type="primary">matK</name>
</gene>
<keyword id="KW-0150">Chloroplast</keyword>
<keyword id="KW-0507">mRNA processing</keyword>
<keyword id="KW-0934">Plastid</keyword>
<keyword id="KW-0694">RNA-binding</keyword>
<keyword id="KW-0819">tRNA processing</keyword>
<feature type="chain" id="PRO_0000143249" description="Maturase K">
    <location>
        <begin position="1"/>
        <end position="502"/>
    </location>
</feature>
<organism>
    <name type="scientific">Arabis blepharophylla</name>
    <name type="common">Coast rock-cress</name>
    <name type="synonym">Erysimum blepharophyllum</name>
    <dbReference type="NCBI Taxonomy" id="81973"/>
    <lineage>
        <taxon>Eukaryota</taxon>
        <taxon>Viridiplantae</taxon>
        <taxon>Streptophyta</taxon>
        <taxon>Embryophyta</taxon>
        <taxon>Tracheophyta</taxon>
        <taxon>Spermatophyta</taxon>
        <taxon>Magnoliopsida</taxon>
        <taxon>eudicotyledons</taxon>
        <taxon>Gunneridae</taxon>
        <taxon>Pentapetalae</taxon>
        <taxon>rosids</taxon>
        <taxon>malvids</taxon>
        <taxon>Brassicales</taxon>
        <taxon>Brassicaceae</taxon>
        <taxon>Arabideae</taxon>
        <taxon>Arabis</taxon>
    </lineage>
</organism>
<protein>
    <recommendedName>
        <fullName evidence="1">Maturase K</fullName>
    </recommendedName>
    <alternativeName>
        <fullName evidence="1">Intron maturase</fullName>
    </alternativeName>
</protein>
<comment type="function">
    <text evidence="1">Usually encoded in the trnK tRNA gene intron. Probably assists in splicing its own and other chloroplast group II introns.</text>
</comment>
<comment type="subcellular location">
    <subcellularLocation>
        <location>Plastid</location>
        <location>Chloroplast</location>
    </subcellularLocation>
</comment>
<comment type="similarity">
    <text evidence="1">Belongs to the intron maturase 2 family. MatK subfamily.</text>
</comment>
<proteinExistence type="inferred from homology"/>
<dbReference type="EMBL" id="AF144353">
    <property type="protein sequence ID" value="AAG43322.1"/>
    <property type="molecule type" value="Genomic_DNA"/>
</dbReference>
<dbReference type="GO" id="GO:0009507">
    <property type="term" value="C:chloroplast"/>
    <property type="evidence" value="ECO:0007669"/>
    <property type="project" value="UniProtKB-SubCell"/>
</dbReference>
<dbReference type="GO" id="GO:0003723">
    <property type="term" value="F:RNA binding"/>
    <property type="evidence" value="ECO:0007669"/>
    <property type="project" value="UniProtKB-KW"/>
</dbReference>
<dbReference type="GO" id="GO:0006397">
    <property type="term" value="P:mRNA processing"/>
    <property type="evidence" value="ECO:0007669"/>
    <property type="project" value="UniProtKB-KW"/>
</dbReference>
<dbReference type="GO" id="GO:0008380">
    <property type="term" value="P:RNA splicing"/>
    <property type="evidence" value="ECO:0007669"/>
    <property type="project" value="UniProtKB-UniRule"/>
</dbReference>
<dbReference type="GO" id="GO:0008033">
    <property type="term" value="P:tRNA processing"/>
    <property type="evidence" value="ECO:0007669"/>
    <property type="project" value="UniProtKB-KW"/>
</dbReference>
<dbReference type="HAMAP" id="MF_01390">
    <property type="entry name" value="MatK"/>
    <property type="match status" value="1"/>
</dbReference>
<dbReference type="InterPro" id="IPR024937">
    <property type="entry name" value="Domain_X"/>
</dbReference>
<dbReference type="InterPro" id="IPR002866">
    <property type="entry name" value="Maturase_MatK"/>
</dbReference>
<dbReference type="InterPro" id="IPR024942">
    <property type="entry name" value="Maturase_MatK_N"/>
</dbReference>
<dbReference type="PANTHER" id="PTHR34811">
    <property type="entry name" value="MATURASE K"/>
    <property type="match status" value="1"/>
</dbReference>
<dbReference type="PANTHER" id="PTHR34811:SF1">
    <property type="entry name" value="MATURASE K"/>
    <property type="match status" value="1"/>
</dbReference>
<dbReference type="Pfam" id="PF01348">
    <property type="entry name" value="Intron_maturas2"/>
    <property type="match status" value="1"/>
</dbReference>
<dbReference type="Pfam" id="PF01824">
    <property type="entry name" value="MatK_N"/>
    <property type="match status" value="1"/>
</dbReference>
<reference key="1">
    <citation type="submission" date="1999-04" db="EMBL/GenBank/DDBJ databases">
        <title>Evolutionary analysis of plastidic maturase K and nuclear chalcone synthase and their utility for phylogenetic reconstructions within the Brassicaceae.</title>
        <authorList>
            <person name="Koch M."/>
            <person name="Mitchell-Olds T."/>
        </authorList>
    </citation>
    <scope>NUCLEOTIDE SEQUENCE [GENOMIC DNA]</scope>
</reference>
<evidence type="ECO:0000255" key="1">
    <source>
        <dbReference type="HAMAP-Rule" id="MF_01390"/>
    </source>
</evidence>
<sequence length="502" mass="59947">MEKFQGYLEFDGARQQSFLYPLFFREYIYVLAYDHGLNRLNKNRSIFLENADYDKKYSSLIVKRIILRMYEQNRLIIPTTDLHKNLGHTNLFYYQMISVLFAVIVEIPFSLRLGSSFEGKQLKKSYNLQSIHSIFPFLEDKLSHFNYVLDVLIPYPIHLEVLVQTLRYRVKDASSLHFFRFCLYEYCNWKNFDIQKKCILNPRFLLFLYNSHICEYESIFFFLRKRSSHLRSTAYEVFFERILFYGKIQNFLKVFVNNFPAMLGLFKDPFLHYVRYHGKSILATKDTPLLMNKWKFYFVNLWQCYFSVWFQSQKVNINQLSKDNLEFLGYLSSLRLNPLVVRSQMLENSFLIDNIRIKLDSKIPISSIIGSLAKDKFCNVLGHPISKATWTDSSDSDILNRFVRICRNISHYYSGSSKKKNLYRINYILRLCCVKTLARKHKSTVRAFLKRLGSGLLEEFLTGEDQVLSLIFPRSYYASKRLYRVRIWYLDILYLNDLVNNE</sequence>